<dbReference type="EMBL" id="U10398">
    <property type="protein sequence ID" value="AAB68418.1"/>
    <property type="molecule type" value="Genomic_DNA"/>
</dbReference>
<dbReference type="EMBL" id="Y13625">
    <property type="protein sequence ID" value="CAA73951.1"/>
    <property type="molecule type" value="Genomic_DNA"/>
</dbReference>
<dbReference type="EMBL" id="AY557846">
    <property type="protein sequence ID" value="AAS56172.1"/>
    <property type="molecule type" value="Genomic_DNA"/>
</dbReference>
<dbReference type="EMBL" id="BK006934">
    <property type="protein sequence ID" value="DAA06831.1"/>
    <property type="molecule type" value="Genomic_DNA"/>
</dbReference>
<dbReference type="PIR" id="S48982">
    <property type="entry name" value="S48982"/>
</dbReference>
<dbReference type="RefSeq" id="NP_012006.1">
    <property type="nucleotide sequence ID" value="NM_001179268.1"/>
</dbReference>
<dbReference type="SMR" id="P38841"/>
<dbReference type="BioGRID" id="36571">
    <property type="interactions" value="37"/>
</dbReference>
<dbReference type="DIP" id="DIP-4718N"/>
<dbReference type="FunCoup" id="P38841">
    <property type="interactions" value="70"/>
</dbReference>
<dbReference type="IntAct" id="P38841">
    <property type="interactions" value="1"/>
</dbReference>
<dbReference type="MINT" id="P38841"/>
<dbReference type="STRING" id="4932.YHR138C"/>
<dbReference type="iPTMnet" id="P38841"/>
<dbReference type="PaxDb" id="4932-YHR138C"/>
<dbReference type="PeptideAtlas" id="P38841"/>
<dbReference type="EnsemblFungi" id="YHR138C_mRNA">
    <property type="protein sequence ID" value="YHR138C"/>
    <property type="gene ID" value="YHR138C"/>
</dbReference>
<dbReference type="GeneID" id="856540"/>
<dbReference type="KEGG" id="sce:YHR138C"/>
<dbReference type="AGR" id="SGD:S000001180"/>
<dbReference type="SGD" id="S000001180">
    <property type="gene designation" value="YHR138C"/>
</dbReference>
<dbReference type="VEuPathDB" id="FungiDB:YHR138C"/>
<dbReference type="eggNOG" id="ENOG502S7VS">
    <property type="taxonomic scope" value="Eukaryota"/>
</dbReference>
<dbReference type="HOGENOM" id="CLU_156026_1_0_1"/>
<dbReference type="InParanoid" id="P38841"/>
<dbReference type="OMA" id="GSITHEY"/>
<dbReference type="OrthoDB" id="5518345at2759"/>
<dbReference type="BioCyc" id="YEAST:G3O-31174-MONOMER"/>
<dbReference type="BioGRID-ORCS" id="856540">
    <property type="hits" value="0 hits in 10 CRISPR screens"/>
</dbReference>
<dbReference type="PRO" id="PR:P38841"/>
<dbReference type="Proteomes" id="UP000002311">
    <property type="component" value="Chromosome VIII"/>
</dbReference>
<dbReference type="RNAct" id="P38841">
    <property type="molecule type" value="protein"/>
</dbReference>
<dbReference type="GO" id="GO:0004866">
    <property type="term" value="F:endopeptidase inhibitor activity"/>
    <property type="evidence" value="ECO:0000315"/>
    <property type="project" value="SGD"/>
</dbReference>
<dbReference type="GO" id="GO:0042144">
    <property type="term" value="P:vacuole fusion, non-autophagic"/>
    <property type="evidence" value="ECO:0000315"/>
    <property type="project" value="SGD"/>
</dbReference>
<dbReference type="FunFam" id="3.30.70.80:FF:000018">
    <property type="entry name" value="YHR138C-like protein"/>
    <property type="match status" value="1"/>
</dbReference>
<dbReference type="Gene3D" id="3.30.70.80">
    <property type="entry name" value="Peptidase S8 propeptide/proteinase inhibitor I9"/>
    <property type="match status" value="1"/>
</dbReference>
<dbReference type="InterPro" id="IPR052471">
    <property type="entry name" value="PBI_I9"/>
</dbReference>
<dbReference type="InterPro" id="IPR037045">
    <property type="entry name" value="S8pro/Inhibitor_I9_sf"/>
</dbReference>
<dbReference type="PANTHER" id="PTHR28288">
    <property type="entry name" value="PROTEASE B INHIBITOR 2"/>
    <property type="match status" value="1"/>
</dbReference>
<dbReference type="PANTHER" id="PTHR28288:SF2">
    <property type="entry name" value="PROTEASE B INHIBITOR 2"/>
    <property type="match status" value="1"/>
</dbReference>
<dbReference type="SUPFAM" id="SSF54897">
    <property type="entry name" value="Protease propeptides/inhibitors"/>
    <property type="match status" value="1"/>
</dbReference>
<sequence length="114" mass="12753">MKASYLVLIFISIFSMAQASSLSSYIVTFPKTDNMATDQNSIIEDVKKYVVDIGGKITHEYSLIKGFTVDLPDSDQILDGLKERLSYIESEYGAKCNLEKDSEVHALNRDHLVA</sequence>
<feature type="signal peptide" evidence="1">
    <location>
        <begin position="1"/>
        <end position="19"/>
    </location>
</feature>
<feature type="chain" id="PRO_0000026706" description="Uncharacterized protein YHR138C">
    <location>
        <begin position="20"/>
        <end position="114"/>
    </location>
</feature>
<feature type="modified residue" description="Phosphoserine" evidence="4">
    <location>
        <position position="41"/>
    </location>
</feature>
<name>YHT8_YEAST</name>
<evidence type="ECO:0000255" key="1"/>
<evidence type="ECO:0000269" key="2">
    <source>
    </source>
</evidence>
<evidence type="ECO:0000305" key="3"/>
<evidence type="ECO:0007744" key="4">
    <source>
    </source>
</evidence>
<comment type="miscellaneous">
    <text evidence="2">Present with 319 molecules/cell in log phase SD medium.</text>
</comment>
<comment type="similarity">
    <text evidence="3">Belongs to the protease inhibitor I9 family.</text>
</comment>
<gene>
    <name type="ordered locus">YHR138C</name>
</gene>
<accession>P38841</accession>
<accession>D3DL87</accession>
<reference key="1">
    <citation type="journal article" date="1994" name="Science">
        <title>Complete nucleotide sequence of Saccharomyces cerevisiae chromosome VIII.</title>
        <authorList>
            <person name="Johnston M."/>
            <person name="Andrews S."/>
            <person name="Brinkman R."/>
            <person name="Cooper J."/>
            <person name="Ding H."/>
            <person name="Dover J."/>
            <person name="Du Z."/>
            <person name="Favello A."/>
            <person name="Fulton L."/>
            <person name="Gattung S."/>
            <person name="Geisel C."/>
            <person name="Kirsten J."/>
            <person name="Kucaba T."/>
            <person name="Hillier L.W."/>
            <person name="Jier M."/>
            <person name="Johnston L."/>
            <person name="Langston Y."/>
            <person name="Latreille P."/>
            <person name="Louis E.J."/>
            <person name="Macri C."/>
            <person name="Mardis E."/>
            <person name="Menezes S."/>
            <person name="Mouser L."/>
            <person name="Nhan M."/>
            <person name="Rifkin L."/>
            <person name="Riles L."/>
            <person name="St Peter H."/>
            <person name="Trevaskis E."/>
            <person name="Vaughan K."/>
            <person name="Vignati D."/>
            <person name="Wilcox L."/>
            <person name="Wohldman P."/>
            <person name="Waterston R."/>
            <person name="Wilson R."/>
            <person name="Vaudin M."/>
        </authorList>
    </citation>
    <scope>NUCLEOTIDE SEQUENCE [LARGE SCALE GENOMIC DNA]</scope>
    <source>
        <strain>ATCC 204508 / S288c</strain>
    </source>
</reference>
<reference key="2">
    <citation type="journal article" date="2014" name="G3 (Bethesda)">
        <title>The reference genome sequence of Saccharomyces cerevisiae: Then and now.</title>
        <authorList>
            <person name="Engel S.R."/>
            <person name="Dietrich F.S."/>
            <person name="Fisk D.G."/>
            <person name="Binkley G."/>
            <person name="Balakrishnan R."/>
            <person name="Costanzo M.C."/>
            <person name="Dwight S.S."/>
            <person name="Hitz B.C."/>
            <person name="Karra K."/>
            <person name="Nash R.S."/>
            <person name="Weng S."/>
            <person name="Wong E.D."/>
            <person name="Lloyd P."/>
            <person name="Skrzypek M.S."/>
            <person name="Miyasato S.R."/>
            <person name="Simison M."/>
            <person name="Cherry J.M."/>
        </authorList>
    </citation>
    <scope>GENOME REANNOTATION</scope>
    <source>
        <strain>ATCC 204508 / S288c</strain>
    </source>
</reference>
<reference key="3">
    <citation type="submission" date="1997-06" db="EMBL/GenBank/DDBJ databases">
        <authorList>
            <person name="Houssaini I.I."/>
            <person name="Vissers S."/>
            <person name="Cartiaux M."/>
            <person name="Urrestarazu A."/>
        </authorList>
    </citation>
    <scope>NUCLEOTIDE SEQUENCE [GENOMIC DNA]</scope>
    <source>
        <strain>Sigma 1278B</strain>
    </source>
</reference>
<reference key="4">
    <citation type="journal article" date="2007" name="Genome Res.">
        <title>Approaching a complete repository of sequence-verified protein-encoding clones for Saccharomyces cerevisiae.</title>
        <authorList>
            <person name="Hu Y."/>
            <person name="Rolfs A."/>
            <person name="Bhullar B."/>
            <person name="Murthy T.V.S."/>
            <person name="Zhu C."/>
            <person name="Berger M.F."/>
            <person name="Camargo A.A."/>
            <person name="Kelley F."/>
            <person name="McCarron S."/>
            <person name="Jepson D."/>
            <person name="Richardson A."/>
            <person name="Raphael J."/>
            <person name="Moreira D."/>
            <person name="Taycher E."/>
            <person name="Zuo D."/>
            <person name="Mohr S."/>
            <person name="Kane M.F."/>
            <person name="Williamson J."/>
            <person name="Simpson A.J.G."/>
            <person name="Bulyk M.L."/>
            <person name="Harlow E."/>
            <person name="Marsischky G."/>
            <person name="Kolodner R.D."/>
            <person name="LaBaer J."/>
        </authorList>
    </citation>
    <scope>NUCLEOTIDE SEQUENCE [GENOMIC DNA]</scope>
    <source>
        <strain>ATCC 204508 / S288c</strain>
    </source>
</reference>
<reference key="5">
    <citation type="journal article" date="2003" name="Nature">
        <title>Global analysis of protein expression in yeast.</title>
        <authorList>
            <person name="Ghaemmaghami S."/>
            <person name="Huh W.-K."/>
            <person name="Bower K."/>
            <person name="Howson R.W."/>
            <person name="Belle A."/>
            <person name="Dephoure N."/>
            <person name="O'Shea E.K."/>
            <person name="Weissman J.S."/>
        </authorList>
    </citation>
    <scope>LEVEL OF PROTEIN EXPRESSION [LARGE SCALE ANALYSIS]</scope>
</reference>
<reference key="6">
    <citation type="journal article" date="2008" name="Mol. Cell. Proteomics">
        <title>A multidimensional chromatography technology for in-depth phosphoproteome analysis.</title>
        <authorList>
            <person name="Albuquerque C.P."/>
            <person name="Smolka M.B."/>
            <person name="Payne S.H."/>
            <person name="Bafna V."/>
            <person name="Eng J."/>
            <person name="Zhou H."/>
        </authorList>
    </citation>
    <scope>PHOSPHORYLATION [LARGE SCALE ANALYSIS] AT SER-41</scope>
    <scope>IDENTIFICATION BY MASS SPECTROMETRY [LARGE SCALE ANALYSIS]</scope>
</reference>
<organism>
    <name type="scientific">Saccharomyces cerevisiae (strain ATCC 204508 / S288c)</name>
    <name type="common">Baker's yeast</name>
    <dbReference type="NCBI Taxonomy" id="559292"/>
    <lineage>
        <taxon>Eukaryota</taxon>
        <taxon>Fungi</taxon>
        <taxon>Dikarya</taxon>
        <taxon>Ascomycota</taxon>
        <taxon>Saccharomycotina</taxon>
        <taxon>Saccharomycetes</taxon>
        <taxon>Saccharomycetales</taxon>
        <taxon>Saccharomycetaceae</taxon>
        <taxon>Saccharomyces</taxon>
    </lineage>
</organism>
<proteinExistence type="evidence at protein level"/>
<protein>
    <recommendedName>
        <fullName>Uncharacterized protein YHR138C</fullName>
    </recommendedName>
</protein>
<keyword id="KW-0597">Phosphoprotein</keyword>
<keyword id="KW-1185">Reference proteome</keyword>
<keyword id="KW-0732">Signal</keyword>